<protein>
    <recommendedName>
        <fullName evidence="1">Probable dual-specificity RNA methyltransferase RlmN</fullName>
        <ecNumber evidence="1">2.1.1.192</ecNumber>
    </recommendedName>
    <alternativeName>
        <fullName evidence="1">23S rRNA (adenine(2503)-C(2))-methyltransferase</fullName>
    </alternativeName>
    <alternativeName>
        <fullName evidence="1">23S rRNA m2A2503 methyltransferase</fullName>
    </alternativeName>
    <alternativeName>
        <fullName evidence="1">Ribosomal RNA large subunit methyltransferase N</fullName>
    </alternativeName>
    <alternativeName>
        <fullName evidence="1">tRNA (adenine(37)-C(2))-methyltransferase</fullName>
    </alternativeName>
    <alternativeName>
        <fullName evidence="1">tRNA m2A37 methyltransferase</fullName>
    </alternativeName>
</protein>
<dbReference type="EC" id="2.1.1.192" evidence="1"/>
<dbReference type="EMBL" id="CP000557">
    <property type="protein sequence ID" value="ABO66403.1"/>
    <property type="molecule type" value="Genomic_DNA"/>
</dbReference>
<dbReference type="SMR" id="A4IM49"/>
<dbReference type="KEGG" id="gtn:GTNG_1027"/>
<dbReference type="eggNOG" id="COG0820">
    <property type="taxonomic scope" value="Bacteria"/>
</dbReference>
<dbReference type="HOGENOM" id="CLU_029101_0_1_9"/>
<dbReference type="Proteomes" id="UP000001578">
    <property type="component" value="Chromosome"/>
</dbReference>
<dbReference type="GO" id="GO:0005737">
    <property type="term" value="C:cytoplasm"/>
    <property type="evidence" value="ECO:0007669"/>
    <property type="project" value="UniProtKB-SubCell"/>
</dbReference>
<dbReference type="GO" id="GO:0051539">
    <property type="term" value="F:4 iron, 4 sulfur cluster binding"/>
    <property type="evidence" value="ECO:0007669"/>
    <property type="project" value="UniProtKB-UniRule"/>
</dbReference>
<dbReference type="GO" id="GO:0046872">
    <property type="term" value="F:metal ion binding"/>
    <property type="evidence" value="ECO:0007669"/>
    <property type="project" value="UniProtKB-KW"/>
</dbReference>
<dbReference type="GO" id="GO:0070040">
    <property type="term" value="F:rRNA (adenine(2503)-C2-)-methyltransferase activity"/>
    <property type="evidence" value="ECO:0007669"/>
    <property type="project" value="UniProtKB-UniRule"/>
</dbReference>
<dbReference type="GO" id="GO:0019843">
    <property type="term" value="F:rRNA binding"/>
    <property type="evidence" value="ECO:0007669"/>
    <property type="project" value="UniProtKB-UniRule"/>
</dbReference>
<dbReference type="GO" id="GO:0002935">
    <property type="term" value="F:tRNA (adenine(37)-C2)-methyltransferase activity"/>
    <property type="evidence" value="ECO:0007669"/>
    <property type="project" value="UniProtKB-UniRule"/>
</dbReference>
<dbReference type="GO" id="GO:0000049">
    <property type="term" value="F:tRNA binding"/>
    <property type="evidence" value="ECO:0007669"/>
    <property type="project" value="UniProtKB-UniRule"/>
</dbReference>
<dbReference type="GO" id="GO:0070475">
    <property type="term" value="P:rRNA base methylation"/>
    <property type="evidence" value="ECO:0007669"/>
    <property type="project" value="UniProtKB-UniRule"/>
</dbReference>
<dbReference type="GO" id="GO:0030488">
    <property type="term" value="P:tRNA methylation"/>
    <property type="evidence" value="ECO:0007669"/>
    <property type="project" value="UniProtKB-UniRule"/>
</dbReference>
<dbReference type="CDD" id="cd01335">
    <property type="entry name" value="Radical_SAM"/>
    <property type="match status" value="1"/>
</dbReference>
<dbReference type="FunFam" id="3.20.20.70:FF:000014">
    <property type="entry name" value="Probable dual-specificity RNA methyltransferase RlmN"/>
    <property type="match status" value="1"/>
</dbReference>
<dbReference type="Gene3D" id="1.10.150.530">
    <property type="match status" value="1"/>
</dbReference>
<dbReference type="Gene3D" id="3.20.20.70">
    <property type="entry name" value="Aldolase class I"/>
    <property type="match status" value="1"/>
</dbReference>
<dbReference type="HAMAP" id="MF_01849">
    <property type="entry name" value="RNA_methyltr_RlmN"/>
    <property type="match status" value="1"/>
</dbReference>
<dbReference type="InterPro" id="IPR013785">
    <property type="entry name" value="Aldolase_TIM"/>
</dbReference>
<dbReference type="InterPro" id="IPR040072">
    <property type="entry name" value="Methyltransferase_A"/>
</dbReference>
<dbReference type="InterPro" id="IPR048641">
    <property type="entry name" value="RlmN_N"/>
</dbReference>
<dbReference type="InterPro" id="IPR027492">
    <property type="entry name" value="RNA_MTrfase_RlmN"/>
</dbReference>
<dbReference type="InterPro" id="IPR004383">
    <property type="entry name" value="rRNA_lsu_MTrfase_RlmN/Cfr"/>
</dbReference>
<dbReference type="InterPro" id="IPR007197">
    <property type="entry name" value="rSAM"/>
</dbReference>
<dbReference type="NCBIfam" id="TIGR00048">
    <property type="entry name" value="rRNA_mod_RlmN"/>
    <property type="match status" value="1"/>
</dbReference>
<dbReference type="PANTHER" id="PTHR30544">
    <property type="entry name" value="23S RRNA METHYLTRANSFERASE"/>
    <property type="match status" value="1"/>
</dbReference>
<dbReference type="PANTHER" id="PTHR30544:SF5">
    <property type="entry name" value="RADICAL SAM CORE DOMAIN-CONTAINING PROTEIN"/>
    <property type="match status" value="1"/>
</dbReference>
<dbReference type="Pfam" id="PF04055">
    <property type="entry name" value="Radical_SAM"/>
    <property type="match status" value="1"/>
</dbReference>
<dbReference type="Pfam" id="PF21016">
    <property type="entry name" value="RlmN_N"/>
    <property type="match status" value="1"/>
</dbReference>
<dbReference type="PIRSF" id="PIRSF006004">
    <property type="entry name" value="CHP00048"/>
    <property type="match status" value="1"/>
</dbReference>
<dbReference type="SFLD" id="SFLDF00275">
    <property type="entry name" value="adenosine_C2_methyltransferase"/>
    <property type="match status" value="1"/>
</dbReference>
<dbReference type="SFLD" id="SFLDG01062">
    <property type="entry name" value="methyltransferase_(Class_A)"/>
    <property type="match status" value="1"/>
</dbReference>
<dbReference type="SUPFAM" id="SSF102114">
    <property type="entry name" value="Radical SAM enzymes"/>
    <property type="match status" value="1"/>
</dbReference>
<dbReference type="PROSITE" id="PS51918">
    <property type="entry name" value="RADICAL_SAM"/>
    <property type="match status" value="1"/>
</dbReference>
<organism>
    <name type="scientific">Geobacillus thermodenitrificans (strain NG80-2)</name>
    <dbReference type="NCBI Taxonomy" id="420246"/>
    <lineage>
        <taxon>Bacteria</taxon>
        <taxon>Bacillati</taxon>
        <taxon>Bacillota</taxon>
        <taxon>Bacilli</taxon>
        <taxon>Bacillales</taxon>
        <taxon>Anoxybacillaceae</taxon>
        <taxon>Geobacillus</taxon>
    </lineage>
</organism>
<feature type="chain" id="PRO_0000350193" description="Probable dual-specificity RNA methyltransferase RlmN">
    <location>
        <begin position="1"/>
        <end position="364"/>
    </location>
</feature>
<feature type="domain" description="Radical SAM core" evidence="2">
    <location>
        <begin position="113"/>
        <end position="346"/>
    </location>
</feature>
<feature type="active site" description="Proton acceptor" evidence="1">
    <location>
        <position position="107"/>
    </location>
</feature>
<feature type="active site" description="S-methylcysteine intermediate" evidence="1">
    <location>
        <position position="351"/>
    </location>
</feature>
<feature type="binding site" evidence="1">
    <location>
        <position position="127"/>
    </location>
    <ligand>
        <name>[4Fe-4S] cluster</name>
        <dbReference type="ChEBI" id="CHEBI:49883"/>
        <note>4Fe-4S-S-AdoMet</note>
    </ligand>
</feature>
<feature type="binding site" evidence="1">
    <location>
        <position position="131"/>
    </location>
    <ligand>
        <name>[4Fe-4S] cluster</name>
        <dbReference type="ChEBI" id="CHEBI:49883"/>
        <note>4Fe-4S-S-AdoMet</note>
    </ligand>
</feature>
<feature type="binding site" evidence="1">
    <location>
        <position position="134"/>
    </location>
    <ligand>
        <name>[4Fe-4S] cluster</name>
        <dbReference type="ChEBI" id="CHEBI:49883"/>
        <note>4Fe-4S-S-AdoMet</note>
    </ligand>
</feature>
<feature type="binding site" evidence="1">
    <location>
        <begin position="177"/>
        <end position="178"/>
    </location>
    <ligand>
        <name>S-adenosyl-L-methionine</name>
        <dbReference type="ChEBI" id="CHEBI:59789"/>
    </ligand>
</feature>
<feature type="binding site" evidence="1">
    <location>
        <position position="209"/>
    </location>
    <ligand>
        <name>S-adenosyl-L-methionine</name>
        <dbReference type="ChEBI" id="CHEBI:59789"/>
    </ligand>
</feature>
<feature type="binding site" evidence="1">
    <location>
        <begin position="232"/>
        <end position="234"/>
    </location>
    <ligand>
        <name>S-adenosyl-L-methionine</name>
        <dbReference type="ChEBI" id="CHEBI:59789"/>
    </ligand>
</feature>
<feature type="binding site" evidence="1">
    <location>
        <position position="308"/>
    </location>
    <ligand>
        <name>S-adenosyl-L-methionine</name>
        <dbReference type="ChEBI" id="CHEBI:59789"/>
    </ligand>
</feature>
<feature type="disulfide bond" description="(transient)" evidence="1">
    <location>
        <begin position="120"/>
        <end position="351"/>
    </location>
</feature>
<name>RLMN_GEOTN</name>
<evidence type="ECO:0000255" key="1">
    <source>
        <dbReference type="HAMAP-Rule" id="MF_01849"/>
    </source>
</evidence>
<evidence type="ECO:0000255" key="2">
    <source>
        <dbReference type="PROSITE-ProRule" id="PRU01266"/>
    </source>
</evidence>
<sequence>MTNTAARRSTGEAQLLPLPSIYSLTLDELKEWLVAHGEKPFRATQIYEWLYGKRVTDFAEMTNLPKRLREQLASAFSITTLKTIVKQTSKDGTIKFLFELHDGYSIETVLMRHNYGNSVCVTTQVGCRIGCTFCASTLGGLKRHLEAGEIVAQVVQVQKALDETEERVSSIVVMGIGEPFDNYDALIKFLRIVNHSKGLNIGARHITVSTSGIIPKIYQFADEGMQINFAISLHAPTTELRTKLMPINKAYPLPKLMEAVRYYIEKTGRRVTFEYGLFGGVNDQLEHAEQLAELLKGLKCHVNLIPVNYVPERNYVRTPRNQIFAFERALKKHGINVTIRREHGHDIDAACGQLRAKERKEETR</sequence>
<reference key="1">
    <citation type="journal article" date="2007" name="Proc. Natl. Acad. Sci. U.S.A.">
        <title>Genome and proteome of long-chain alkane degrading Geobacillus thermodenitrificans NG80-2 isolated from a deep-subsurface oil reservoir.</title>
        <authorList>
            <person name="Feng L."/>
            <person name="Wang W."/>
            <person name="Cheng J."/>
            <person name="Ren Y."/>
            <person name="Zhao G."/>
            <person name="Gao C."/>
            <person name="Tang Y."/>
            <person name="Liu X."/>
            <person name="Han W."/>
            <person name="Peng X."/>
            <person name="Liu R."/>
            <person name="Wang L."/>
        </authorList>
    </citation>
    <scope>NUCLEOTIDE SEQUENCE [LARGE SCALE GENOMIC DNA]</scope>
    <source>
        <strain>NG80-2</strain>
    </source>
</reference>
<accession>A4IM49</accession>
<comment type="function">
    <text evidence="1">Specifically methylates position 2 of adenine 2503 in 23S rRNA and position 2 of adenine 37 in tRNAs.</text>
</comment>
<comment type="catalytic activity">
    <reaction evidence="1">
        <text>adenosine(2503) in 23S rRNA + 2 reduced [2Fe-2S]-[ferredoxin] + 2 S-adenosyl-L-methionine = 2-methyladenosine(2503) in 23S rRNA + 5'-deoxyadenosine + L-methionine + 2 oxidized [2Fe-2S]-[ferredoxin] + S-adenosyl-L-homocysteine</text>
        <dbReference type="Rhea" id="RHEA:42916"/>
        <dbReference type="Rhea" id="RHEA-COMP:10000"/>
        <dbReference type="Rhea" id="RHEA-COMP:10001"/>
        <dbReference type="Rhea" id="RHEA-COMP:10152"/>
        <dbReference type="Rhea" id="RHEA-COMP:10282"/>
        <dbReference type="ChEBI" id="CHEBI:17319"/>
        <dbReference type="ChEBI" id="CHEBI:33737"/>
        <dbReference type="ChEBI" id="CHEBI:33738"/>
        <dbReference type="ChEBI" id="CHEBI:57844"/>
        <dbReference type="ChEBI" id="CHEBI:57856"/>
        <dbReference type="ChEBI" id="CHEBI:59789"/>
        <dbReference type="ChEBI" id="CHEBI:74411"/>
        <dbReference type="ChEBI" id="CHEBI:74497"/>
        <dbReference type="EC" id="2.1.1.192"/>
    </reaction>
</comment>
<comment type="catalytic activity">
    <reaction evidence="1">
        <text>adenosine(37) in tRNA + 2 reduced [2Fe-2S]-[ferredoxin] + 2 S-adenosyl-L-methionine = 2-methyladenosine(37) in tRNA + 5'-deoxyadenosine + L-methionine + 2 oxidized [2Fe-2S]-[ferredoxin] + S-adenosyl-L-homocysteine</text>
        <dbReference type="Rhea" id="RHEA:43332"/>
        <dbReference type="Rhea" id="RHEA-COMP:10000"/>
        <dbReference type="Rhea" id="RHEA-COMP:10001"/>
        <dbReference type="Rhea" id="RHEA-COMP:10162"/>
        <dbReference type="Rhea" id="RHEA-COMP:10485"/>
        <dbReference type="ChEBI" id="CHEBI:17319"/>
        <dbReference type="ChEBI" id="CHEBI:33737"/>
        <dbReference type="ChEBI" id="CHEBI:33738"/>
        <dbReference type="ChEBI" id="CHEBI:57844"/>
        <dbReference type="ChEBI" id="CHEBI:57856"/>
        <dbReference type="ChEBI" id="CHEBI:59789"/>
        <dbReference type="ChEBI" id="CHEBI:74411"/>
        <dbReference type="ChEBI" id="CHEBI:74497"/>
        <dbReference type="EC" id="2.1.1.192"/>
    </reaction>
</comment>
<comment type="cofactor">
    <cofactor evidence="1">
        <name>[4Fe-4S] cluster</name>
        <dbReference type="ChEBI" id="CHEBI:49883"/>
    </cofactor>
    <text evidence="1">Binds 1 [4Fe-4S] cluster. The cluster is coordinated with 3 cysteines and an exchangeable S-adenosyl-L-methionine.</text>
</comment>
<comment type="subcellular location">
    <subcellularLocation>
        <location evidence="1">Cytoplasm</location>
    </subcellularLocation>
</comment>
<comment type="miscellaneous">
    <text evidence="1">Reaction proceeds by a ping-pong mechanism involving intermediate methylation of a conserved cysteine residue.</text>
</comment>
<comment type="similarity">
    <text evidence="1">Belongs to the radical SAM superfamily. RlmN family.</text>
</comment>
<proteinExistence type="inferred from homology"/>
<gene>
    <name evidence="1" type="primary">rlmN</name>
    <name type="ordered locus">GTNG_1027</name>
</gene>
<keyword id="KW-0004">4Fe-4S</keyword>
<keyword id="KW-0963">Cytoplasm</keyword>
<keyword id="KW-1015">Disulfide bond</keyword>
<keyword id="KW-0408">Iron</keyword>
<keyword id="KW-0411">Iron-sulfur</keyword>
<keyword id="KW-0479">Metal-binding</keyword>
<keyword id="KW-0489">Methyltransferase</keyword>
<keyword id="KW-0698">rRNA processing</keyword>
<keyword id="KW-0949">S-adenosyl-L-methionine</keyword>
<keyword id="KW-0808">Transferase</keyword>
<keyword id="KW-0819">tRNA processing</keyword>